<name>XPP3_DICDI</name>
<reference key="1">
    <citation type="journal article" date="2005" name="Nature">
        <title>The genome of the social amoeba Dictyostelium discoideum.</title>
        <authorList>
            <person name="Eichinger L."/>
            <person name="Pachebat J.A."/>
            <person name="Gloeckner G."/>
            <person name="Rajandream M.A."/>
            <person name="Sucgang R."/>
            <person name="Berriman M."/>
            <person name="Song J."/>
            <person name="Olsen R."/>
            <person name="Szafranski K."/>
            <person name="Xu Q."/>
            <person name="Tunggal B."/>
            <person name="Kummerfeld S."/>
            <person name="Madera M."/>
            <person name="Konfortov B.A."/>
            <person name="Rivero F."/>
            <person name="Bankier A.T."/>
            <person name="Lehmann R."/>
            <person name="Hamlin N."/>
            <person name="Davies R."/>
            <person name="Gaudet P."/>
            <person name="Fey P."/>
            <person name="Pilcher K."/>
            <person name="Chen G."/>
            <person name="Saunders D."/>
            <person name="Sodergren E.J."/>
            <person name="Davis P."/>
            <person name="Kerhornou A."/>
            <person name="Nie X."/>
            <person name="Hall N."/>
            <person name="Anjard C."/>
            <person name="Hemphill L."/>
            <person name="Bason N."/>
            <person name="Farbrother P."/>
            <person name="Desany B."/>
            <person name="Just E."/>
            <person name="Morio T."/>
            <person name="Rost R."/>
            <person name="Churcher C.M."/>
            <person name="Cooper J."/>
            <person name="Haydock S."/>
            <person name="van Driessche N."/>
            <person name="Cronin A."/>
            <person name="Goodhead I."/>
            <person name="Muzny D.M."/>
            <person name="Mourier T."/>
            <person name="Pain A."/>
            <person name="Lu M."/>
            <person name="Harper D."/>
            <person name="Lindsay R."/>
            <person name="Hauser H."/>
            <person name="James K.D."/>
            <person name="Quiles M."/>
            <person name="Madan Babu M."/>
            <person name="Saito T."/>
            <person name="Buchrieser C."/>
            <person name="Wardroper A."/>
            <person name="Felder M."/>
            <person name="Thangavelu M."/>
            <person name="Johnson D."/>
            <person name="Knights A."/>
            <person name="Loulseged H."/>
            <person name="Mungall K.L."/>
            <person name="Oliver K."/>
            <person name="Price C."/>
            <person name="Quail M.A."/>
            <person name="Urushihara H."/>
            <person name="Hernandez J."/>
            <person name="Rabbinowitsch E."/>
            <person name="Steffen D."/>
            <person name="Sanders M."/>
            <person name="Ma J."/>
            <person name="Kohara Y."/>
            <person name="Sharp S."/>
            <person name="Simmonds M.N."/>
            <person name="Spiegler S."/>
            <person name="Tivey A."/>
            <person name="Sugano S."/>
            <person name="White B."/>
            <person name="Walker D."/>
            <person name="Woodward J.R."/>
            <person name="Winckler T."/>
            <person name="Tanaka Y."/>
            <person name="Shaulsky G."/>
            <person name="Schleicher M."/>
            <person name="Weinstock G.M."/>
            <person name="Rosenthal A."/>
            <person name="Cox E.C."/>
            <person name="Chisholm R.L."/>
            <person name="Gibbs R.A."/>
            <person name="Loomis W.F."/>
            <person name="Platzer M."/>
            <person name="Kay R.R."/>
            <person name="Williams J.G."/>
            <person name="Dear P.H."/>
            <person name="Noegel A.A."/>
            <person name="Barrell B.G."/>
            <person name="Kuspa A."/>
        </authorList>
    </citation>
    <scope>NUCLEOTIDE SEQUENCE [LARGE SCALE GENOMIC DNA]</scope>
    <source>
        <strain>AX4</strain>
    </source>
</reference>
<sequence length="518" mass="58869">MNNICKLNKFIISKSSSSLSSTSSKIKTNCLIKNAKMFSSSLNLNRFYSTNNTNNNKLKKPLSIGQATFETHPYLLDKNEITKGIKMKEFKDRREKLMKNFPIGSVVVIFTPPEPMMSYDIPWSFRQNTNFNYLTGFNEPEAVLVLVKTSELDHQSYLFVRERNEEKEKWDGARCGGENVKKYFGIDFGYNLTNRDIPILGKLLKSTTDGKLYCNTTPWNQLSNKLEPFLENIKFYTVESLLQQIRLIKSDAEIKMMLKSGEIAGTSFHETMKYTGTKSSSSSSSSSSSPLNEYQVSAYFEWCVKDKGAQRMSYPPVVAGGDNGHTLHYIQNNQLLNYCDLLLMDAGCEYWGYTSDITRTFPVSGKFTEAQSEVYQAVLDVNKKCIELCKPGETINSIHLKSVELIQAHLKRLGIINESNPNDYRLYYPHSIGHYLGMDTHDTLDFDYGVTLEPGMIITIEPGIYISKYDSNVPEKYRGISIRVEDDVVIPNLNNSPLVLTHLAPKEISEIESIMSNK</sequence>
<gene>
    <name type="primary">xpnpep3</name>
    <name type="ORF">DDB_G0282075</name>
</gene>
<proteinExistence type="evidence at transcript level"/>
<evidence type="ECO:0000250" key="1">
    <source>
        <dbReference type="UniProtKB" id="Q9NQH7"/>
    </source>
</evidence>
<evidence type="ECO:0000255" key="2"/>
<evidence type="ECO:0000305" key="3"/>
<keyword id="KW-0031">Aminopeptidase</keyword>
<keyword id="KW-0963">Cytoplasm</keyword>
<keyword id="KW-0378">Hydrolase</keyword>
<keyword id="KW-0464">Manganese</keyword>
<keyword id="KW-0479">Metal-binding</keyword>
<keyword id="KW-0482">Metalloprotease</keyword>
<keyword id="KW-0496">Mitochondrion</keyword>
<keyword id="KW-0645">Protease</keyword>
<keyword id="KW-1185">Reference proteome</keyword>
<keyword id="KW-0809">Transit peptide</keyword>
<accession>Q54T46</accession>
<comment type="function">
    <text evidence="1">Catalyzes the removal of a penultimate prolyl residue from the N-termini of peptides, such as Leu-Pro-Ala. Also shows low activity towards peptides with Ala or Ser at the P1 position.</text>
</comment>
<comment type="catalytic activity">
    <reaction evidence="1">
        <text>Release of any N-terminal amino acid, including proline, that is linked to proline, even from a dipeptide or tripeptide.</text>
        <dbReference type="EC" id="3.4.11.9"/>
    </reaction>
</comment>
<comment type="cofactor">
    <cofactor evidence="1">
        <name>Mn(2+)</name>
        <dbReference type="ChEBI" id="CHEBI:29035"/>
    </cofactor>
    <text evidence="1">Binds 2 manganese ions per subunit.</text>
</comment>
<comment type="subunit">
    <text evidence="1">Homodimer.</text>
</comment>
<comment type="subcellular location">
    <subcellularLocation>
        <location evidence="1">Mitochondrion</location>
    </subcellularLocation>
    <subcellularLocation>
        <location evidence="1">Cytoplasm</location>
    </subcellularLocation>
    <text evidence="1">Mainly mitochondrial.</text>
</comment>
<comment type="similarity">
    <text evidence="3">Belongs to the peptidase M24B family.</text>
</comment>
<organism>
    <name type="scientific">Dictyostelium discoideum</name>
    <name type="common">Social amoeba</name>
    <dbReference type="NCBI Taxonomy" id="44689"/>
    <lineage>
        <taxon>Eukaryota</taxon>
        <taxon>Amoebozoa</taxon>
        <taxon>Evosea</taxon>
        <taxon>Eumycetozoa</taxon>
        <taxon>Dictyostelia</taxon>
        <taxon>Dictyosteliales</taxon>
        <taxon>Dictyosteliaceae</taxon>
        <taxon>Dictyostelium</taxon>
    </lineage>
</organism>
<protein>
    <recommendedName>
        <fullName evidence="1">Xaa-Pro aminopeptidase 3</fullName>
        <shortName>X-Pro aminopeptidase 3</shortName>
        <ecNumber>3.4.11.9</ecNumber>
    </recommendedName>
    <alternativeName>
        <fullName>Aminopeptidase P3</fullName>
        <shortName>APP3</shortName>
    </alternativeName>
</protein>
<feature type="transit peptide" description="Mitochondrion" evidence="2">
    <location>
        <begin position="1"/>
        <end position="48"/>
    </location>
</feature>
<feature type="chain" id="PRO_0000331199" description="Xaa-Pro aminopeptidase 3">
    <location>
        <begin position="49"/>
        <end position="518"/>
    </location>
</feature>
<feature type="binding site" evidence="1">
    <location>
        <position position="314"/>
    </location>
    <ligand>
        <name>substrate</name>
    </ligand>
</feature>
<feature type="binding site" evidence="1">
    <location>
        <position position="345"/>
    </location>
    <ligand>
        <name>Mn(2+)</name>
        <dbReference type="ChEBI" id="CHEBI:29035"/>
        <label>2</label>
    </ligand>
</feature>
<feature type="binding site" evidence="1">
    <location>
        <position position="345"/>
    </location>
    <ligand>
        <name>substrate</name>
    </ligand>
</feature>
<feature type="binding site" evidence="1">
    <location>
        <position position="356"/>
    </location>
    <ligand>
        <name>Mn(2+)</name>
        <dbReference type="ChEBI" id="CHEBI:29035"/>
        <label>1</label>
    </ligand>
</feature>
<feature type="binding site" evidence="1">
    <location>
        <position position="356"/>
    </location>
    <ligand>
        <name>Mn(2+)</name>
        <dbReference type="ChEBI" id="CHEBI:29035"/>
        <label>2</label>
    </ligand>
</feature>
<feature type="binding site" evidence="1">
    <location>
        <position position="356"/>
    </location>
    <ligand>
        <name>substrate</name>
    </ligand>
</feature>
<feature type="binding site" evidence="1">
    <location>
        <position position="434"/>
    </location>
    <ligand>
        <name>Mn(2+)</name>
        <dbReference type="ChEBI" id="CHEBI:29035"/>
        <label>1</label>
    </ligand>
</feature>
<feature type="binding site" evidence="1">
    <location>
        <position position="434"/>
    </location>
    <ligand>
        <name>substrate</name>
    </ligand>
</feature>
<feature type="binding site" evidence="1">
    <location>
        <position position="441"/>
    </location>
    <ligand>
        <name>substrate</name>
    </ligand>
</feature>
<feature type="binding site" evidence="1">
    <location>
        <position position="461"/>
    </location>
    <ligand>
        <name>Mn(2+)</name>
        <dbReference type="ChEBI" id="CHEBI:29035"/>
        <label>1</label>
    </ligand>
</feature>
<feature type="binding site" evidence="1">
    <location>
        <position position="461"/>
    </location>
    <ligand>
        <name>substrate</name>
    </ligand>
</feature>
<feature type="binding site" evidence="1">
    <location>
        <position position="485"/>
    </location>
    <ligand>
        <name>Mn(2+)</name>
        <dbReference type="ChEBI" id="CHEBI:29035"/>
        <label>1</label>
    </ligand>
</feature>
<feature type="binding site" evidence="1">
    <location>
        <position position="485"/>
    </location>
    <ligand>
        <name>Mn(2+)</name>
        <dbReference type="ChEBI" id="CHEBI:29035"/>
        <label>2</label>
    </ligand>
</feature>
<feature type="binding site" evidence="1">
    <location>
        <position position="485"/>
    </location>
    <ligand>
        <name>substrate</name>
    </ligand>
</feature>
<dbReference type="EC" id="3.4.11.9"/>
<dbReference type="EMBL" id="AAFI02000044">
    <property type="protein sequence ID" value="EAL66459.1"/>
    <property type="molecule type" value="Genomic_DNA"/>
</dbReference>
<dbReference type="RefSeq" id="XP_640405.1">
    <property type="nucleotide sequence ID" value="XM_635313.1"/>
</dbReference>
<dbReference type="SMR" id="Q54T46"/>
<dbReference type="FunCoup" id="Q54T46">
    <property type="interactions" value="407"/>
</dbReference>
<dbReference type="STRING" id="44689.Q54T46"/>
<dbReference type="PaxDb" id="44689-DDB0304432"/>
<dbReference type="EnsemblProtists" id="EAL66459">
    <property type="protein sequence ID" value="EAL66459"/>
    <property type="gene ID" value="DDB_G0282075"/>
</dbReference>
<dbReference type="GeneID" id="8623360"/>
<dbReference type="KEGG" id="ddi:DDB_G0282075"/>
<dbReference type="dictyBase" id="DDB_G0282075">
    <property type="gene designation" value="xpnpep3"/>
</dbReference>
<dbReference type="VEuPathDB" id="AmoebaDB:DDB_G0282075"/>
<dbReference type="eggNOG" id="KOG2414">
    <property type="taxonomic scope" value="Eukaryota"/>
</dbReference>
<dbReference type="HOGENOM" id="CLU_017266_1_1_1"/>
<dbReference type="InParanoid" id="Q54T46"/>
<dbReference type="OMA" id="DSYFWYL"/>
<dbReference type="PhylomeDB" id="Q54T46"/>
<dbReference type="PRO" id="PR:Q54T46"/>
<dbReference type="Proteomes" id="UP000002195">
    <property type="component" value="Chromosome 3"/>
</dbReference>
<dbReference type="GO" id="GO:0005739">
    <property type="term" value="C:mitochondrion"/>
    <property type="evidence" value="ECO:0000318"/>
    <property type="project" value="GO_Central"/>
</dbReference>
<dbReference type="GO" id="GO:0004177">
    <property type="term" value="F:aminopeptidase activity"/>
    <property type="evidence" value="ECO:0000318"/>
    <property type="project" value="GO_Central"/>
</dbReference>
<dbReference type="GO" id="GO:0030145">
    <property type="term" value="F:manganese ion binding"/>
    <property type="evidence" value="ECO:0007669"/>
    <property type="project" value="InterPro"/>
</dbReference>
<dbReference type="GO" id="GO:0070006">
    <property type="term" value="F:metalloaminopeptidase activity"/>
    <property type="evidence" value="ECO:0007669"/>
    <property type="project" value="InterPro"/>
</dbReference>
<dbReference type="GO" id="GO:0006508">
    <property type="term" value="P:proteolysis"/>
    <property type="evidence" value="ECO:0000318"/>
    <property type="project" value="GO_Central"/>
</dbReference>
<dbReference type="CDD" id="cd01087">
    <property type="entry name" value="Prolidase"/>
    <property type="match status" value="1"/>
</dbReference>
<dbReference type="Gene3D" id="3.90.230.10">
    <property type="entry name" value="Creatinase/methionine aminopeptidase superfamily"/>
    <property type="match status" value="1"/>
</dbReference>
<dbReference type="Gene3D" id="3.40.350.10">
    <property type="entry name" value="Creatinase/prolidase N-terminal domain"/>
    <property type="match status" value="1"/>
</dbReference>
<dbReference type="InterPro" id="IPR007865">
    <property type="entry name" value="Aminopep_P_N"/>
</dbReference>
<dbReference type="InterPro" id="IPR029149">
    <property type="entry name" value="Creatin/AminoP/Spt16_N"/>
</dbReference>
<dbReference type="InterPro" id="IPR036005">
    <property type="entry name" value="Creatinase/aminopeptidase-like"/>
</dbReference>
<dbReference type="InterPro" id="IPR000994">
    <property type="entry name" value="Pept_M24"/>
</dbReference>
<dbReference type="InterPro" id="IPR052433">
    <property type="entry name" value="X-Pro_dipept-like"/>
</dbReference>
<dbReference type="PANTHER" id="PTHR43226">
    <property type="entry name" value="XAA-PRO AMINOPEPTIDASE 3"/>
    <property type="match status" value="1"/>
</dbReference>
<dbReference type="PANTHER" id="PTHR43226:SF4">
    <property type="entry name" value="XAA-PRO AMINOPEPTIDASE 3"/>
    <property type="match status" value="1"/>
</dbReference>
<dbReference type="Pfam" id="PF05195">
    <property type="entry name" value="AMP_N"/>
    <property type="match status" value="1"/>
</dbReference>
<dbReference type="Pfam" id="PF00557">
    <property type="entry name" value="Peptidase_M24"/>
    <property type="match status" value="1"/>
</dbReference>
<dbReference type="SMART" id="SM01011">
    <property type="entry name" value="AMP_N"/>
    <property type="match status" value="1"/>
</dbReference>
<dbReference type="SUPFAM" id="SSF55920">
    <property type="entry name" value="Creatinase/aminopeptidase"/>
    <property type="match status" value="1"/>
</dbReference>
<dbReference type="SUPFAM" id="SSF53092">
    <property type="entry name" value="Creatinase/prolidase N-terminal domain"/>
    <property type="match status" value="1"/>
</dbReference>